<evidence type="ECO:0000255" key="1">
    <source>
        <dbReference type="HAMAP-Rule" id="MF_01255"/>
    </source>
</evidence>
<gene>
    <name evidence="1" type="primary">ectC</name>
    <name type="ordered locus">Mlg_1190</name>
</gene>
<comment type="function">
    <text evidence="1">Catalyzes the circularization of gamma-N-acetyl-alpha,gamma-diaminobutyric acid (ADABA) to ectoine (1,4,5,6-tetrahydro-2-methyl-4-pyrimidine carboxylic acid), which is an excellent osmoprotectant.</text>
</comment>
<comment type="catalytic activity">
    <reaction evidence="1">
        <text>(2S)-4-acetamido-2-aminobutanoate = L-ectoine + H2O</text>
        <dbReference type="Rhea" id="RHEA:17281"/>
        <dbReference type="ChEBI" id="CHEBI:15377"/>
        <dbReference type="ChEBI" id="CHEBI:58515"/>
        <dbReference type="ChEBI" id="CHEBI:58929"/>
        <dbReference type="EC" id="4.2.1.108"/>
    </reaction>
</comment>
<comment type="pathway">
    <text evidence="1">Amine and polyamine biosynthesis; ectoine biosynthesis; L-ectoine from L-aspartate 4-semialdehyde: step 3/3.</text>
</comment>
<comment type="similarity">
    <text evidence="1">Belongs to the ectoine synthase family.</text>
</comment>
<organism>
    <name type="scientific">Alkalilimnicola ehrlichii (strain ATCC BAA-1101 / DSM 17681 / MLHE-1)</name>
    <dbReference type="NCBI Taxonomy" id="187272"/>
    <lineage>
        <taxon>Bacteria</taxon>
        <taxon>Pseudomonadati</taxon>
        <taxon>Pseudomonadota</taxon>
        <taxon>Gammaproteobacteria</taxon>
        <taxon>Chromatiales</taxon>
        <taxon>Ectothiorhodospiraceae</taxon>
        <taxon>Alkalilimnicola</taxon>
    </lineage>
</organism>
<name>ECTC_ALKEH</name>
<keyword id="KW-0456">Lyase</keyword>
<keyword id="KW-1185">Reference proteome</keyword>
<dbReference type="EC" id="4.2.1.108" evidence="1"/>
<dbReference type="EMBL" id="CP000453">
    <property type="protein sequence ID" value="ABI56539.1"/>
    <property type="molecule type" value="Genomic_DNA"/>
</dbReference>
<dbReference type="RefSeq" id="WP_011628934.1">
    <property type="nucleotide sequence ID" value="NC_008340.1"/>
</dbReference>
<dbReference type="SMR" id="Q0A9E8"/>
<dbReference type="KEGG" id="aeh:Mlg_1190"/>
<dbReference type="eggNOG" id="COG1917">
    <property type="taxonomic scope" value="Bacteria"/>
</dbReference>
<dbReference type="HOGENOM" id="CLU_154525_0_0_6"/>
<dbReference type="OrthoDB" id="9801830at2"/>
<dbReference type="UniPathway" id="UPA00067">
    <property type="reaction ID" value="UER00123"/>
</dbReference>
<dbReference type="Proteomes" id="UP000001962">
    <property type="component" value="Chromosome"/>
</dbReference>
<dbReference type="GO" id="GO:0033990">
    <property type="term" value="F:ectoine synthase activity"/>
    <property type="evidence" value="ECO:0007669"/>
    <property type="project" value="UniProtKB-EC"/>
</dbReference>
<dbReference type="GO" id="GO:0019491">
    <property type="term" value="P:ectoine biosynthetic process"/>
    <property type="evidence" value="ECO:0007669"/>
    <property type="project" value="UniProtKB-UniRule"/>
</dbReference>
<dbReference type="CDD" id="cd06978">
    <property type="entry name" value="cupin_EctC"/>
    <property type="match status" value="1"/>
</dbReference>
<dbReference type="Gene3D" id="2.60.120.10">
    <property type="entry name" value="Jelly Rolls"/>
    <property type="match status" value="1"/>
</dbReference>
<dbReference type="HAMAP" id="MF_01255">
    <property type="entry name" value="Ectoine_synth"/>
    <property type="match status" value="1"/>
</dbReference>
<dbReference type="InterPro" id="IPR010462">
    <property type="entry name" value="Ectoine_synth"/>
</dbReference>
<dbReference type="InterPro" id="IPR014710">
    <property type="entry name" value="RmlC-like_jellyroll"/>
</dbReference>
<dbReference type="InterPro" id="IPR011051">
    <property type="entry name" value="RmlC_Cupin_sf"/>
</dbReference>
<dbReference type="NCBIfam" id="NF009806">
    <property type="entry name" value="PRK13290.1"/>
    <property type="match status" value="1"/>
</dbReference>
<dbReference type="PANTHER" id="PTHR39289">
    <property type="match status" value="1"/>
</dbReference>
<dbReference type="PANTHER" id="PTHR39289:SF1">
    <property type="entry name" value="L-ECTOINE SYNTHASE"/>
    <property type="match status" value="1"/>
</dbReference>
<dbReference type="Pfam" id="PF06339">
    <property type="entry name" value="Ectoine_synth"/>
    <property type="match status" value="1"/>
</dbReference>
<dbReference type="SUPFAM" id="SSF51182">
    <property type="entry name" value="RmlC-like cupins"/>
    <property type="match status" value="1"/>
</dbReference>
<sequence length="132" mass="15191">MKIVKLQDIIGTEREVHGEGWRSRRILLKKDKMGFSLHETIWPPGHELRMWYKNHLEAVYCVAGNGSIEDLETGEVHELYDGVCYALDKHDRHILRGGTEEMRLVCVFNPPVTGLEVHDEDGAYCLVEDDDD</sequence>
<accession>Q0A9E8</accession>
<feature type="chain" id="PRO_1000067228" description="L-ectoine synthase">
    <location>
        <begin position="1"/>
        <end position="132"/>
    </location>
</feature>
<proteinExistence type="inferred from homology"/>
<reference key="1">
    <citation type="submission" date="2006-08" db="EMBL/GenBank/DDBJ databases">
        <title>Complete sequence of Alkalilimnicola ehrilichei MLHE-1.</title>
        <authorList>
            <person name="Copeland A."/>
            <person name="Lucas S."/>
            <person name="Lapidus A."/>
            <person name="Barry K."/>
            <person name="Detter J.C."/>
            <person name="Glavina del Rio T."/>
            <person name="Hammon N."/>
            <person name="Israni S."/>
            <person name="Dalin E."/>
            <person name="Tice H."/>
            <person name="Pitluck S."/>
            <person name="Sims D."/>
            <person name="Brettin T."/>
            <person name="Bruce D."/>
            <person name="Han C."/>
            <person name="Tapia R."/>
            <person name="Gilna P."/>
            <person name="Schmutz J."/>
            <person name="Larimer F."/>
            <person name="Land M."/>
            <person name="Hauser L."/>
            <person name="Kyrpides N."/>
            <person name="Mikhailova N."/>
            <person name="Oremland R.S."/>
            <person name="Hoeft S.E."/>
            <person name="Switzer-Blum J."/>
            <person name="Kulp T."/>
            <person name="King G."/>
            <person name="Tabita R."/>
            <person name="Witte B."/>
            <person name="Santini J.M."/>
            <person name="Basu P."/>
            <person name="Hollibaugh J.T."/>
            <person name="Xie G."/>
            <person name="Stolz J.F."/>
            <person name="Richardson P."/>
        </authorList>
    </citation>
    <scope>NUCLEOTIDE SEQUENCE [LARGE SCALE GENOMIC DNA]</scope>
    <source>
        <strain>ATCC BAA-1101 / DSM 17681 / MLHE-1</strain>
    </source>
</reference>
<protein>
    <recommendedName>
        <fullName evidence="1">L-ectoine synthase</fullName>
        <ecNumber evidence="1">4.2.1.108</ecNumber>
    </recommendedName>
    <alternativeName>
        <fullName evidence="1">N-acetyldiaminobutyrate dehydratase</fullName>
    </alternativeName>
</protein>